<sequence length="400" mass="44101">MNPASAPPPLPPPGQQVIHVTQDLDTDLEALFNSVMNPKPSSWRKKILPESFFKEPDSGSHSRQSSTDSSGGHPGPRLAGGAQHVRSHSSPASLQLGTGAGAAGSPAQQHAHLRQQSYDVTDELPLPPGWEMTFTATGQRYFLNHIEKITTWQDPRKAMNQPLNHMNLHPAVSSTPVPQRSMAVSQPNLVMNHQHQQQMAPSTLSQQNHPTQNPPAGLMSMPNALTTQQQQQQKLRLQRIQMERERIRMRQEELMRQEAALCRQLPMEAETLAPVQAAVNPPTMTPDMRSITNNSSDPFLNGGPYHSREQSTDSGLGLGCYSVPTTPEDFLSNVDEMDTGENAGQTPMNINPQQTRFPDFLDCLPGTNVDLGTLESEDLIPLFNDVESALNKSEPFLTWL</sequence>
<reference key="1">
    <citation type="journal article" date="2000" name="EMBO J.">
        <title>TAZ: a novel transcriptional co-activator regulated by interactions with 14-3-3 and PDZ domain proteins.</title>
        <authorList>
            <person name="Kanai F."/>
            <person name="Marignani P.A."/>
            <person name="Sarbassova D."/>
            <person name="Yagi R."/>
            <person name="Hall R.A."/>
            <person name="Donowitz M."/>
            <person name="Hisaminato A."/>
            <person name="Fujiwara T."/>
            <person name="Ito Y."/>
            <person name="Cantley L.C."/>
            <person name="Yaffe M.B."/>
        </authorList>
    </citation>
    <scope>NUCLEOTIDE SEQUENCE [MRNA]</scope>
    <scope>FUNCTION</scope>
    <scope>SUBCELLULAR LOCATION</scope>
    <scope>TISSUE SPECIFICITY</scope>
</reference>
<reference key="2">
    <citation type="journal article" date="2004" name="Nat. Genet.">
        <title>Complete sequencing and characterization of 21,243 full-length human cDNAs.</title>
        <authorList>
            <person name="Ota T."/>
            <person name="Suzuki Y."/>
            <person name="Nishikawa T."/>
            <person name="Otsuki T."/>
            <person name="Sugiyama T."/>
            <person name="Irie R."/>
            <person name="Wakamatsu A."/>
            <person name="Hayashi K."/>
            <person name="Sato H."/>
            <person name="Nagai K."/>
            <person name="Kimura K."/>
            <person name="Makita H."/>
            <person name="Sekine M."/>
            <person name="Obayashi M."/>
            <person name="Nishi T."/>
            <person name="Shibahara T."/>
            <person name="Tanaka T."/>
            <person name="Ishii S."/>
            <person name="Yamamoto J."/>
            <person name="Saito K."/>
            <person name="Kawai Y."/>
            <person name="Isono Y."/>
            <person name="Nakamura Y."/>
            <person name="Nagahari K."/>
            <person name="Murakami K."/>
            <person name="Yasuda T."/>
            <person name="Iwayanagi T."/>
            <person name="Wagatsuma M."/>
            <person name="Shiratori A."/>
            <person name="Sudo H."/>
            <person name="Hosoiri T."/>
            <person name="Kaku Y."/>
            <person name="Kodaira H."/>
            <person name="Kondo H."/>
            <person name="Sugawara M."/>
            <person name="Takahashi M."/>
            <person name="Kanda K."/>
            <person name="Yokoi T."/>
            <person name="Furuya T."/>
            <person name="Kikkawa E."/>
            <person name="Omura Y."/>
            <person name="Abe K."/>
            <person name="Kamihara K."/>
            <person name="Katsuta N."/>
            <person name="Sato K."/>
            <person name="Tanikawa M."/>
            <person name="Yamazaki M."/>
            <person name="Ninomiya K."/>
            <person name="Ishibashi T."/>
            <person name="Yamashita H."/>
            <person name="Murakawa K."/>
            <person name="Fujimori K."/>
            <person name="Tanai H."/>
            <person name="Kimata M."/>
            <person name="Watanabe M."/>
            <person name="Hiraoka S."/>
            <person name="Chiba Y."/>
            <person name="Ishida S."/>
            <person name="Ono Y."/>
            <person name="Takiguchi S."/>
            <person name="Watanabe S."/>
            <person name="Yosida M."/>
            <person name="Hotuta T."/>
            <person name="Kusano J."/>
            <person name="Kanehori K."/>
            <person name="Takahashi-Fujii A."/>
            <person name="Hara H."/>
            <person name="Tanase T.-O."/>
            <person name="Nomura Y."/>
            <person name="Togiya S."/>
            <person name="Komai F."/>
            <person name="Hara R."/>
            <person name="Takeuchi K."/>
            <person name="Arita M."/>
            <person name="Imose N."/>
            <person name="Musashino K."/>
            <person name="Yuuki H."/>
            <person name="Oshima A."/>
            <person name="Sasaki N."/>
            <person name="Aotsuka S."/>
            <person name="Yoshikawa Y."/>
            <person name="Matsunawa H."/>
            <person name="Ichihara T."/>
            <person name="Shiohata N."/>
            <person name="Sano S."/>
            <person name="Moriya S."/>
            <person name="Momiyama H."/>
            <person name="Satoh N."/>
            <person name="Takami S."/>
            <person name="Terashima Y."/>
            <person name="Suzuki O."/>
            <person name="Nakagawa S."/>
            <person name="Senoh A."/>
            <person name="Mizoguchi H."/>
            <person name="Goto Y."/>
            <person name="Shimizu F."/>
            <person name="Wakebe H."/>
            <person name="Hishigaki H."/>
            <person name="Watanabe T."/>
            <person name="Sugiyama A."/>
            <person name="Takemoto M."/>
            <person name="Kawakami B."/>
            <person name="Yamazaki M."/>
            <person name="Watanabe K."/>
            <person name="Kumagai A."/>
            <person name="Itakura S."/>
            <person name="Fukuzumi Y."/>
            <person name="Fujimori Y."/>
            <person name="Komiyama M."/>
            <person name="Tashiro H."/>
            <person name="Tanigami A."/>
            <person name="Fujiwara T."/>
            <person name="Ono T."/>
            <person name="Yamada K."/>
            <person name="Fujii Y."/>
            <person name="Ozaki K."/>
            <person name="Hirao M."/>
            <person name="Ohmori Y."/>
            <person name="Kawabata A."/>
            <person name="Hikiji T."/>
            <person name="Kobatake N."/>
            <person name="Inagaki H."/>
            <person name="Ikema Y."/>
            <person name="Okamoto S."/>
            <person name="Okitani R."/>
            <person name="Kawakami T."/>
            <person name="Noguchi S."/>
            <person name="Itoh T."/>
            <person name="Shigeta K."/>
            <person name="Senba T."/>
            <person name="Matsumura K."/>
            <person name="Nakajima Y."/>
            <person name="Mizuno T."/>
            <person name="Morinaga M."/>
            <person name="Sasaki M."/>
            <person name="Togashi T."/>
            <person name="Oyama M."/>
            <person name="Hata H."/>
            <person name="Watanabe M."/>
            <person name="Komatsu T."/>
            <person name="Mizushima-Sugano J."/>
            <person name="Satoh T."/>
            <person name="Shirai Y."/>
            <person name="Takahashi Y."/>
            <person name="Nakagawa K."/>
            <person name="Okumura K."/>
            <person name="Nagase T."/>
            <person name="Nomura N."/>
            <person name="Kikuchi H."/>
            <person name="Masuho Y."/>
            <person name="Yamashita R."/>
            <person name="Nakai K."/>
            <person name="Yada T."/>
            <person name="Nakamura Y."/>
            <person name="Ohara O."/>
            <person name="Isogai T."/>
            <person name="Sugano S."/>
        </authorList>
    </citation>
    <scope>NUCLEOTIDE SEQUENCE [LARGE SCALE MRNA]</scope>
    <source>
        <tissue>Embryo</tissue>
    </source>
</reference>
<reference key="3">
    <citation type="submission" date="2005-09" db="EMBL/GenBank/DDBJ databases">
        <authorList>
            <person name="Mural R.J."/>
            <person name="Istrail S."/>
            <person name="Sutton G.G."/>
            <person name="Florea L."/>
            <person name="Halpern A.L."/>
            <person name="Mobarry C.M."/>
            <person name="Lippert R."/>
            <person name="Walenz B."/>
            <person name="Shatkay H."/>
            <person name="Dew I."/>
            <person name="Miller J.R."/>
            <person name="Flanigan M.J."/>
            <person name="Edwards N.J."/>
            <person name="Bolanos R."/>
            <person name="Fasulo D."/>
            <person name="Halldorsson B.V."/>
            <person name="Hannenhalli S."/>
            <person name="Turner R."/>
            <person name="Yooseph S."/>
            <person name="Lu F."/>
            <person name="Nusskern D.R."/>
            <person name="Shue B.C."/>
            <person name="Zheng X.H."/>
            <person name="Zhong F."/>
            <person name="Delcher A.L."/>
            <person name="Huson D.H."/>
            <person name="Kravitz S.A."/>
            <person name="Mouchard L."/>
            <person name="Reinert K."/>
            <person name="Remington K.A."/>
            <person name="Clark A.G."/>
            <person name="Waterman M.S."/>
            <person name="Eichler E.E."/>
            <person name="Adams M.D."/>
            <person name="Hunkapiller M.W."/>
            <person name="Myers E.W."/>
            <person name="Venter J.C."/>
        </authorList>
    </citation>
    <scope>NUCLEOTIDE SEQUENCE [LARGE SCALE GENOMIC DNA]</scope>
</reference>
<reference key="4">
    <citation type="journal article" date="2004" name="Genome Res.">
        <title>The status, quality, and expansion of the NIH full-length cDNA project: the Mammalian Gene Collection (MGC).</title>
        <authorList>
            <consortium name="The MGC Project Team"/>
        </authorList>
    </citation>
    <scope>NUCLEOTIDE SEQUENCE [LARGE SCALE MRNA]</scope>
    <source>
        <tissue>Placenta</tissue>
    </source>
</reference>
<reference key="5">
    <citation type="journal article" date="2007" name="BMC Genomics">
        <title>The full-ORF clone resource of the German cDNA consortium.</title>
        <authorList>
            <person name="Bechtel S."/>
            <person name="Rosenfelder H."/>
            <person name="Duda A."/>
            <person name="Schmidt C.P."/>
            <person name="Ernst U."/>
            <person name="Wellenreuther R."/>
            <person name="Mehrle A."/>
            <person name="Schuster C."/>
            <person name="Bahr A."/>
            <person name="Bloecker H."/>
            <person name="Heubner D."/>
            <person name="Hoerlein A."/>
            <person name="Michel G."/>
            <person name="Wedler H."/>
            <person name="Koehrer K."/>
            <person name="Ottenwaelder B."/>
            <person name="Poustka A."/>
            <person name="Wiemann S."/>
            <person name="Schupp I."/>
        </authorList>
    </citation>
    <scope>NUCLEOTIDE SEQUENCE [LARGE SCALE MRNA] OF 3-400</scope>
    <source>
        <tissue>Amygdala</tissue>
        <tissue>Uterus</tissue>
    </source>
</reference>
<reference key="6">
    <citation type="journal article" date="2006" name="Cell">
        <title>Global, in vivo, and site-specific phosphorylation dynamics in signaling networks.</title>
        <authorList>
            <person name="Olsen J.V."/>
            <person name="Blagoev B."/>
            <person name="Gnad F."/>
            <person name="Macek B."/>
            <person name="Kumar C."/>
            <person name="Mortensen P."/>
            <person name="Mann M."/>
        </authorList>
    </citation>
    <scope>IDENTIFICATION BY MASS SPECTROMETRY [LARGE SCALE ANALYSIS]</scope>
    <source>
        <tissue>Cervix carcinoma</tissue>
    </source>
</reference>
<reference key="7">
    <citation type="journal article" date="2008" name="Mol. Cell. Biol.">
        <title>TAZ promotes cell proliferation and epithelial-mesenchymal transition and is inhibited by the hippo pathway.</title>
        <authorList>
            <person name="Lei Q.Y."/>
            <person name="Zhang H."/>
            <person name="Zhao B."/>
            <person name="Zha Z.Y."/>
            <person name="Bai F."/>
            <person name="Pei X.H."/>
            <person name="Zhao S."/>
            <person name="Xiong Y."/>
            <person name="Guan K.L."/>
        </authorList>
    </citation>
    <scope>FUNCTION</scope>
    <scope>PHOSPHORYLATION AT SER-89 AND SER-311</scope>
    <scope>MUTAGENESIS OF SER-89 AND SER-311</scope>
</reference>
<reference key="8">
    <citation type="journal article" date="2008" name="Nat. Cell Biol.">
        <title>TAZ controls Smad nucleocytoplasmic shuttling and regulates human embryonic stem-cell self-renewal.</title>
        <authorList>
            <person name="Varelas X."/>
            <person name="Sakuma R."/>
            <person name="Samavarchi-Tehrani P."/>
            <person name="Peerani R."/>
            <person name="Rao B.M."/>
            <person name="Dembowy J."/>
            <person name="Yaffe M.B."/>
            <person name="Zandstra P.W."/>
            <person name="Wrana J.L."/>
        </authorList>
    </citation>
    <scope>FUNCTION</scope>
    <scope>SUBCELLULAR LOCATION</scope>
    <scope>INTERACTION WITH SMAD2; SMAD3; SMAD4 AND MED15</scope>
</reference>
<reference key="9">
    <citation type="journal article" date="2008" name="Proc. Natl. Acad. Sci. U.S.A.">
        <title>A quantitative atlas of mitotic phosphorylation.</title>
        <authorList>
            <person name="Dephoure N."/>
            <person name="Zhou C."/>
            <person name="Villen J."/>
            <person name="Beausoleil S.A."/>
            <person name="Bakalarski C.E."/>
            <person name="Elledge S.J."/>
            <person name="Gygi S.P."/>
        </authorList>
    </citation>
    <scope>PHOSPHORYLATION [LARGE SCALE ANALYSIS] AT SER-105</scope>
    <scope>IDENTIFICATION BY MASS SPECTROMETRY [LARGE SCALE ANALYSIS]</scope>
    <source>
        <tissue>Cervix carcinoma</tissue>
    </source>
</reference>
<reference key="10">
    <citation type="journal article" date="2009" name="Exp. Cell Res.">
        <title>TAZ is a coactivator for Pax8 and TTF-1, two transcription factors involved in thyroid differentiation.</title>
        <authorList>
            <person name="Di Palma T."/>
            <person name="D'Andrea B."/>
            <person name="Liguori G.L."/>
            <person name="Liguoro A."/>
            <person name="de Cristofaro T."/>
            <person name="Del Prete D."/>
            <person name="Pappalardo A."/>
            <person name="Mascia A."/>
            <person name="Zannini M."/>
        </authorList>
    </citation>
    <scope>FUNCTION</scope>
    <scope>SUBCELLULAR LOCATION</scope>
    <scope>INTERACTION WITH PAX8 AND NKX2-1</scope>
    <scope>TISSUE SPECIFICITY</scope>
</reference>
<reference key="11">
    <citation type="journal article" date="2009" name="J. Biol. Chem.">
        <title>TEAD transcription factors mediate the function of TAZ in cell growth and epithelial-mesenchymal transition.</title>
        <authorList>
            <person name="Zhang H."/>
            <person name="Liu C.Y."/>
            <person name="Zha Z.Y."/>
            <person name="Zhao B."/>
            <person name="Yao J."/>
            <person name="Zhao S."/>
            <person name="Xiong Y."/>
            <person name="Lei Q.Y."/>
            <person name="Guan K.L."/>
        </authorList>
    </citation>
    <scope>INTERACTION WITH TEAD1; TEAD2; TEAD3 AND TEAD4</scope>
    <scope>MUTAGENESIS OF SER-51</scope>
</reference>
<reference key="12">
    <citation type="journal article" date="2010" name="Dev. Cell">
        <title>The Crumbs complex couples cell density sensing to Hippo-dependent control of the TGF-beta-SMAD pathway.</title>
        <authorList>
            <person name="Varelas X."/>
            <person name="Samavarchi-Tehrani P."/>
            <person name="Narimatsu M."/>
            <person name="Weiss A."/>
            <person name="Cockburn K."/>
            <person name="Larsen B.G."/>
            <person name="Rossant J."/>
            <person name="Wrana J.L."/>
        </authorList>
    </citation>
    <scope>INTERACTION WITH PALS1</scope>
    <scope>SUBCELLULAR LOCATION</scope>
</reference>
<reference key="13">
    <citation type="journal article" date="2010" name="Sci. Signal.">
        <title>Quantitative phosphoproteomics reveals widespread full phosphorylation site occupancy during mitosis.</title>
        <authorList>
            <person name="Olsen J.V."/>
            <person name="Vermeulen M."/>
            <person name="Santamaria A."/>
            <person name="Kumar C."/>
            <person name="Miller M.L."/>
            <person name="Jensen L.J."/>
            <person name="Gnad F."/>
            <person name="Cox J."/>
            <person name="Jensen T.S."/>
            <person name="Nigg E.A."/>
            <person name="Brunak S."/>
            <person name="Mann M."/>
        </authorList>
    </citation>
    <scope>PHOSPHORYLATION [LARGE SCALE ANALYSIS] AT SER-105</scope>
    <scope>IDENTIFICATION BY MASS SPECTROMETRY [LARGE SCALE ANALYSIS]</scope>
    <source>
        <tissue>Cervix carcinoma</tissue>
    </source>
</reference>
<reference key="14">
    <citation type="journal article" date="2011" name="Genes Dev.">
        <title>Angiomotin is a novel Hippo pathway component that inhibits YAP oncoprotein.</title>
        <authorList>
            <person name="Zhao B."/>
            <person name="Li L."/>
            <person name="Lu Q."/>
            <person name="Wang L.H."/>
            <person name="Liu C.Y."/>
            <person name="Lei Q."/>
            <person name="Guan K.L."/>
        </authorList>
    </citation>
    <scope>INTERACTION WITH AMOT</scope>
</reference>
<reference key="15">
    <citation type="journal article" date="2011" name="Sci. Signal.">
        <title>System-wide temporal characterization of the proteome and phosphoproteome of human embryonic stem cell differentiation.</title>
        <authorList>
            <person name="Rigbolt K.T."/>
            <person name="Prokhorova T.A."/>
            <person name="Akimov V."/>
            <person name="Henningsen J."/>
            <person name="Johansen P.T."/>
            <person name="Kratchmarova I."/>
            <person name="Kassem M."/>
            <person name="Mann M."/>
            <person name="Olsen J.V."/>
            <person name="Blagoev B."/>
        </authorList>
    </citation>
    <scope>IDENTIFICATION BY MASS SPECTROMETRY [LARGE SCALE ANALYSIS]</scope>
</reference>
<reference key="16">
    <citation type="journal article" date="2013" name="J. Biol. Chem.">
        <title>Cellular localization and characterization of cytosolic binding partners for Gla domain-containing proteins PRRG4 and PRRG2.</title>
        <authorList>
            <person name="Yazicioglu M.N."/>
            <person name="Monaldini L."/>
            <person name="Chu K."/>
            <person name="Khazi F.R."/>
            <person name="Murphy S.L."/>
            <person name="Huang H."/>
            <person name="Margaritis P."/>
            <person name="High K.A."/>
        </authorList>
    </citation>
    <scope>INTERACTION WITH PRRG4</scope>
    <scope>MUTAGENESIS OF SER-89; 111-ALA--ALA-158 AND 394-GLU--LEU-400</scope>
</reference>
<reference key="17">
    <citation type="journal article" date="2013" name="Gene">
        <title>AMOTL2 interaction with TAZ causes the inhibition of surfactant proteins expression in lung cells.</title>
        <authorList>
            <person name="Lucci V."/>
            <person name="Di Palma T."/>
            <person name="D'Ambrosio C."/>
            <person name="Scaloni A."/>
            <person name="Zannini M."/>
        </authorList>
    </citation>
    <scope>FUNCTION</scope>
    <scope>INTERACTION WITH AMOTL2</scope>
    <scope>SUBCELLULAR LOCATION</scope>
</reference>
<reference key="18">
    <citation type="journal article" date="2013" name="J. Proteome Res.">
        <title>Toward a comprehensive characterization of a human cancer cell phosphoproteome.</title>
        <authorList>
            <person name="Zhou H."/>
            <person name="Di Palma S."/>
            <person name="Preisinger C."/>
            <person name="Peng M."/>
            <person name="Polat A.N."/>
            <person name="Heck A.J."/>
            <person name="Mohammed S."/>
        </authorList>
    </citation>
    <scope>PHOSPHORYLATION [LARGE SCALE ANALYSIS] AT SER-62 AND SER-295</scope>
    <scope>IDENTIFICATION BY MASS SPECTROMETRY [LARGE SCALE ANALYSIS]</scope>
    <source>
        <tissue>Cervix carcinoma</tissue>
    </source>
</reference>
<reference key="19">
    <citation type="journal article" date="2014" name="J. Proteomics">
        <title>An enzyme assisted RP-RPLC approach for in-depth analysis of human liver phosphoproteome.</title>
        <authorList>
            <person name="Bian Y."/>
            <person name="Song C."/>
            <person name="Cheng K."/>
            <person name="Dong M."/>
            <person name="Wang F."/>
            <person name="Huang J."/>
            <person name="Sun D."/>
            <person name="Wang L."/>
            <person name="Ye M."/>
            <person name="Zou H."/>
        </authorList>
    </citation>
    <scope>IDENTIFICATION BY MASS SPECTROMETRY [LARGE SCALE ANALYSIS]</scope>
    <source>
        <tissue>Liver</tissue>
    </source>
</reference>
<reference key="20">
    <citation type="journal article" date="2015" name="Nat. Commun.">
        <title>Actin remodelling factors control ciliogenesis by regulating YAP/TAZ activity and vesicle trafficking.</title>
        <authorList>
            <person name="Kim J."/>
            <person name="Jo H."/>
            <person name="Hong H."/>
            <person name="Kim M.H."/>
            <person name="Kim J.M."/>
            <person name="Lee J.K."/>
            <person name="Heo W.D."/>
            <person name="Kim J."/>
        </authorList>
    </citation>
    <scope>SUBCELLULAR LOCATION</scope>
</reference>
<reference key="21">
    <citation type="journal article" date="2018" name="Nat. Commun.">
        <title>Regulation of Yki/Yap subcellular localization and Hpo signaling by a nuclear kinase PRP4K.</title>
        <authorList>
            <person name="Cho Y.S."/>
            <person name="Zhu J."/>
            <person name="Li S."/>
            <person name="Wang B."/>
            <person name="Han Y."/>
            <person name="Jiang J."/>
        </authorList>
    </citation>
    <scope>SUBCELLULAR LOCATION</scope>
    <scope>PHOSPHORYLATION BY PRP4K</scope>
</reference>
<keyword id="KW-0002">3D-structure</keyword>
<keyword id="KW-0010">Activator</keyword>
<keyword id="KW-0965">Cell junction</keyword>
<keyword id="KW-1003">Cell membrane</keyword>
<keyword id="KW-0175">Coiled coil</keyword>
<keyword id="KW-0963">Cytoplasm</keyword>
<keyword id="KW-1017">Isopeptide bond</keyword>
<keyword id="KW-0472">Membrane</keyword>
<keyword id="KW-0539">Nucleus</keyword>
<keyword id="KW-0597">Phosphoprotein</keyword>
<keyword id="KW-1267">Proteomics identification</keyword>
<keyword id="KW-0656">Proto-oncogene</keyword>
<keyword id="KW-1185">Reference proteome</keyword>
<keyword id="KW-0796">Tight junction</keyword>
<keyword id="KW-0804">Transcription</keyword>
<keyword id="KW-0805">Transcription regulation</keyword>
<keyword id="KW-0832">Ubl conjugation</keyword>
<gene>
    <name evidence="20" type="primary">WWTR1</name>
    <name evidence="17 18" type="synonym">TAZ</name>
</gene>
<protein>
    <recommendedName>
        <fullName evidence="19">WW domain-containing transcription regulator protein 1</fullName>
    </recommendedName>
    <alternativeName>
        <fullName evidence="20">Transcriptional coactivator with PDZ-binding motif</fullName>
    </alternativeName>
</protein>
<proteinExistence type="evidence at protein level"/>
<feature type="chain" id="PRO_0000076069" description="WW domain-containing transcription regulator protein 1">
    <location>
        <begin position="1"/>
        <end position="400"/>
    </location>
</feature>
<feature type="domain" description="WW" evidence="4">
    <location>
        <begin position="124"/>
        <end position="157"/>
    </location>
</feature>
<feature type="region of interest" description="Disordered" evidence="5">
    <location>
        <begin position="52"/>
        <end position="117"/>
    </location>
</feature>
<feature type="region of interest" description="Required for interaction with PALS1" evidence="11">
    <location>
        <begin position="222"/>
        <end position="400"/>
    </location>
</feature>
<feature type="coiled-coil region" evidence="3">
    <location>
        <begin position="225"/>
        <end position="259"/>
    </location>
</feature>
<feature type="short sequence motif" description="PDZ-binding">
    <location>
        <begin position="394"/>
        <end position="400"/>
    </location>
</feature>
<feature type="compositionally biased region" description="Polar residues" evidence="5">
    <location>
        <begin position="61"/>
        <end position="70"/>
    </location>
</feature>
<feature type="modified residue" description="Phosphoserine" evidence="23">
    <location>
        <position position="62"/>
    </location>
</feature>
<feature type="modified residue" description="Phosphoserine; by LATS2" evidence="7">
    <location>
        <position position="89"/>
    </location>
</feature>
<feature type="modified residue" description="Phosphoserine" evidence="21 22">
    <location>
        <position position="105"/>
    </location>
</feature>
<feature type="modified residue" description="Phosphoserine" evidence="23">
    <location>
        <position position="295"/>
    </location>
</feature>
<feature type="modified residue" description="Phosphoserine; by LATS2" evidence="7">
    <location>
        <position position="311"/>
    </location>
</feature>
<feature type="cross-link" description="Glycyl lysine isopeptide (Lys-Gly) (interchain with G-Cter in ubiquitin)" evidence="2">
    <location>
        <position position="46"/>
    </location>
</feature>
<feature type="mutagenesis site" description="Loss of interaction with TEAD4." evidence="10">
    <original>S</original>
    <variation>A</variation>
    <variation>D</variation>
    <location>
        <position position="51"/>
    </location>
</feature>
<feature type="mutagenesis site" description="Significant resistance to inhibition by STK3/MST2 and LATS2. No effect on binding to PRRG4." evidence="7 13">
    <original>S</original>
    <variation>A</variation>
    <location>
        <position position="89"/>
    </location>
</feature>
<feature type="mutagenesis site" description="Reduced binding to PRRG4." evidence="13">
    <location>
        <begin position="111"/>
        <end position="158"/>
    </location>
</feature>
<feature type="mutagenesis site" description="Partial resistance to inhibition by MST2 and LATS2." evidence="7">
    <original>S</original>
    <variation>A</variation>
    <location>
        <position position="311"/>
    </location>
</feature>
<feature type="mutagenesis site" description="No effect on binding to PRRG4." evidence="13">
    <location>
        <begin position="394"/>
        <end position="400"/>
    </location>
</feature>
<comment type="function">
    <text evidence="6 7 8 9 14">Transcriptional coactivator which acts as a downstream regulatory target in the Hippo signaling pathway that plays a pivotal role in organ size control and tumor suppression by restricting proliferation and promoting apoptosis (PubMed:11118213, PubMed:18227151, PubMed:23911299). The core of this pathway is composed of a kinase cascade wherein STK3/MST2 and STK4/MST1, in complex with its regulatory protein SAV1, phosphorylates and activates LATS1/2 in complex with its regulatory protein MOB1, which in turn phosphorylates and inactivates YAP1 oncoprotein and WWTR1/TAZ (PubMed:18227151). WWTR1 enhances PAX8 and NKX2-1/TTF1-dependent gene activation (PubMed:19010321). In conjunction with YAP1, involved in the regulation of TGFB1-dependent SMAD2 and SMAD3 nuclear accumulation (PubMed:18568018). Plays a key role in coupling SMADs to the transcriptional machinery such as the mediator complex (PubMed:18568018). Regulates embryonic stem-cell self-renewal, promotes cell proliferation and epithelial-mesenchymal transition (PubMed:18227151, PubMed:18568018).</text>
</comment>
<comment type="subunit">
    <text evidence="2 8 9 10 11 12 13 14">Binds to SLC9A3R2 via the PDZ motif at the plasma membrane (By similarity). Binds to YWHAZ in vivo and in vitro through the phosphoserine-binding motif RSHSSP (By similarity). Interacts (via coiled-coil domain) with SMAD2 (via MH1 domain), SMAD3 and SMAD4 (PubMed:18568018). Interacts with MED15 (PubMed:18568018). Interacts with PAX8 and NKX2-1 (PubMed:19010321). Interacts with TEAD1, TEAD2, TEAD3 and TEAD4 (PubMed:19324877). Interacts (via WW domain) with PALS1 (PubMed:21145499). Interacts with LATS1 (By similarity). Interacts with YAP1 (when phosphorylated at 'Ser-127') (By similarity). Interacts (via WW domain) with PRRG4 (via cytoplasmic domain) (PubMed:23873930). Interacts (via WW domain) with AMOTL2 (via PPXY motif); the interaction promotes WWTR1/TAZ localization to the cytoplasm and tight junctions, thereby inhibiting its transcriptional coactivator properties (PubMed:23911299). Interacts (via WW domain) with AMOT isoform 1; the interaction facilitates translocation of WWTR1/TAZ to the cytoplasm (PubMed:21205866).</text>
</comment>
<comment type="interaction">
    <interactant intactId="EBI-747743">
        <id>Q9GZV5</id>
    </interactant>
    <interactant intactId="EBI-307461">
        <id>Q9Y297</id>
        <label>BTRC</label>
    </interactant>
    <organismsDiffer>false</organismsDiffer>
    <experiments>2</experiments>
</comment>
<comment type="interaction">
    <interactant intactId="EBI-747743">
        <id>Q9GZV5</id>
    </interactant>
    <interactant intactId="EBI-12049899">
        <id>Q96LT6</id>
        <label>C1orf74</label>
    </interactant>
    <organismsDiffer>false</organismsDiffer>
    <experiments>3</experiments>
</comment>
<comment type="interaction">
    <interactant intactId="EBI-747743">
        <id>Q9GZV5</id>
    </interactant>
    <interactant intactId="EBI-356265">
        <id>Q8IX12</id>
        <label>CCAR1</label>
    </interactant>
    <organismsDiffer>false</organismsDiffer>
    <experiments>2</experiments>
</comment>
<comment type="interaction">
    <interactant intactId="EBI-747743">
        <id>Q9GZV5</id>
    </interactant>
    <interactant intactId="EBI-491549">
        <id>P35222</id>
        <label>CTNNB1</label>
    </interactant>
    <organismsDiffer>false</organismsDiffer>
    <experiments>4</experiments>
</comment>
<comment type="interaction">
    <interactant intactId="EBI-747743">
        <id>Q9GZV5</id>
    </interactant>
    <interactant intactId="EBI-723489">
        <id>O14640</id>
        <label>DVL1</label>
    </interactant>
    <organismsDiffer>false</organismsDiffer>
    <experiments>2</experiments>
</comment>
<comment type="interaction">
    <interactant intactId="EBI-747743">
        <id>Q9GZV5</id>
    </interactant>
    <interactant intactId="EBI-740850">
        <id>O14641</id>
        <label>DVL2</label>
    </interactant>
    <organismsDiffer>false</organismsDiffer>
    <experiments>4</experiments>
</comment>
<comment type="interaction">
    <interactant intactId="EBI-747743">
        <id>Q9GZV5</id>
    </interactant>
    <interactant intactId="EBI-17178971">
        <id>Q14005-2</id>
        <label>IL16</label>
    </interactant>
    <organismsDiffer>false</organismsDiffer>
    <experiments>3</experiments>
</comment>
<comment type="interaction">
    <interactant intactId="EBI-747743">
        <id>Q9GZV5</id>
    </interactant>
    <interactant intactId="EBI-444209">
        <id>O95835</id>
        <label>LATS1</label>
    </interactant>
    <organismsDiffer>false</organismsDiffer>
    <experiments>5</experiments>
</comment>
<comment type="interaction">
    <interactant intactId="EBI-747743">
        <id>Q9GZV5</id>
    </interactant>
    <interactant intactId="EBI-3918643">
        <id>Q9BZD6</id>
        <label>PRRG4</label>
    </interactant>
    <organismsDiffer>false</organismsDiffer>
    <experiments>4</experiments>
</comment>
<comment type="interaction">
    <interactant intactId="EBI-747743">
        <id>Q9GZV5</id>
    </interactant>
    <interactant intactId="EBI-743502">
        <id>Q8WWV3</id>
        <label>RTN4IP1</label>
    </interactant>
    <organismsDiffer>false</organismsDiffer>
    <experiments>3</experiments>
</comment>
<comment type="interaction">
    <interactant intactId="EBI-747743">
        <id>Q9GZV5</id>
    </interactant>
    <interactant intactId="EBI-357345">
        <id>Q14160</id>
        <label>SCRIB</label>
    </interactant>
    <organismsDiffer>false</organismsDiffer>
    <experiments>3</experiments>
</comment>
<comment type="interaction">
    <interactant intactId="EBI-747743">
        <id>Q9GZV5</id>
    </interactant>
    <interactant intactId="EBI-2555179">
        <id>Q9NUJ3</id>
        <label>TCP11L1</label>
    </interactant>
    <organismsDiffer>false</organismsDiffer>
    <experiments>3</experiments>
</comment>
<comment type="interaction">
    <interactant intactId="EBI-747743">
        <id>Q9GZV5</id>
    </interactant>
    <interactant intactId="EBI-12151837">
        <id>P28347-2</id>
        <label>TEAD1</label>
    </interactant>
    <organismsDiffer>false</organismsDiffer>
    <experiments>3</experiments>
</comment>
<comment type="interaction">
    <interactant intactId="EBI-747743">
        <id>Q9GZV5</id>
    </interactant>
    <interactant intactId="EBI-9370956">
        <id>Q15562-2</id>
        <label>TEAD2</label>
    </interactant>
    <organismsDiffer>false</organismsDiffer>
    <experiments>3</experiments>
</comment>
<comment type="interaction">
    <interactant intactId="EBI-747743">
        <id>Q9GZV5</id>
    </interactant>
    <interactant intactId="EBI-746720">
        <id>Q99594</id>
        <label>TEAD3</label>
    </interactant>
    <organismsDiffer>false</organismsDiffer>
    <experiments>5</experiments>
</comment>
<comment type="interaction">
    <interactant intactId="EBI-747743">
        <id>Q9GZV5</id>
    </interactant>
    <interactant intactId="EBI-747736">
        <id>Q15561</id>
        <label>TEAD4</label>
    </interactant>
    <organismsDiffer>false</organismsDiffer>
    <experiments>11</experiments>
</comment>
<comment type="interaction">
    <interactant intactId="EBI-747743">
        <id>Q9GZV5</id>
    </interactant>
    <interactant intactId="EBI-727055">
        <id>Q969T9</id>
        <label>WBP2</label>
    </interactant>
    <organismsDiffer>false</organismsDiffer>
    <experiments>6</experiments>
</comment>
<comment type="interaction">
    <interactant intactId="EBI-747743">
        <id>Q9GZV5</id>
    </interactant>
    <interactant intactId="EBI-356498">
        <id>P62258</id>
        <label>YWHAE</label>
    </interactant>
    <organismsDiffer>false</organismsDiffer>
    <experiments>4</experiments>
</comment>
<comment type="interaction">
    <interactant intactId="EBI-747743">
        <id>Q9GZV5</id>
    </interactant>
    <interactant intactId="EBI-359832">
        <id>P61981</id>
        <label>YWHAG</label>
    </interactant>
    <organismsDiffer>false</organismsDiffer>
    <experiments>5</experiments>
</comment>
<comment type="subcellular location">
    <subcellularLocation>
        <location evidence="6 8 9 11 14 15 16">Nucleus</location>
    </subcellularLocation>
    <subcellularLocation>
        <location evidence="8 14 15 16">Cytoplasm</location>
    </subcellularLocation>
    <subcellularLocation>
        <location evidence="6">Cell membrane</location>
    </subcellularLocation>
    <subcellularLocation>
        <location evidence="1">Cell junction</location>
        <location evidence="1">Tight junction</location>
    </subcellularLocation>
    <text evidence="2 8 11 14 16">Concentrates along specific portions of the plasma membrane, and accumulates in punctate nuclear bodies (By similarity). When phosphorylated, is retained in the cytoplasm by YWHAZ (By similarity). Can be retained in the nucleus by MED15 (PubMed:18568018). Localized in the cytoplasm in areas of epithelial cell high density (PubMed:21145499). At blastocyst stage expressed in the nucleus in trophectodermal cells, however expressed in the cytoplasm in the inner cell mass (By similarity). In the nucleus, phosphorylation by PRP4K induces nuclear exclusion (PubMed:29695716). Interaction with AMOTL2 results in localization to the cytoplasm and tight junctions (PubMed:23911299).</text>
</comment>
<comment type="tissue specificity">
    <text evidence="6 9">Highly expressed in kidney, heart, placenta and lung. Expressed in the thyroid tissue.</text>
</comment>
<comment type="domain">
    <text evidence="2">The PDZ-binding motif is essential for stimulated gene transcription. It localizes the protein into both punctate nuclear foci and plasma membrane-associated complexes.</text>
</comment>
<comment type="domain">
    <text evidence="2">Binds to transcription factors via its WW domain.</text>
</comment>
<comment type="PTM">
    <text evidence="7 16">Phosphorylated by LATS2 and STK3/MST2. Phosphorylation by LATS2 results in creation of 14-3-3 binding sites, retention in the cytoplasm, and functional inactivation. Phosphorylation results in the inhibition of transcriptional coactivation through YWHAZ-mediated nuclear export. Phosphorylated in the nucleus by PRP4K; phosphorylation leads to nuclear exclusion (PubMed:29695716).</text>
</comment>
<comment type="PTM">
    <text evidence="2">Ubiquitinated at Lys-46; leading to proteasomal degradation. Deubiquitinated and stabilized by UCHL1 at Lys-46; leading to inhibition of osteoclastogenesis.</text>
</comment>
<dbReference type="EMBL" id="AJ299431">
    <property type="protein sequence ID" value="CAC17722.1"/>
    <property type="molecule type" value="mRNA"/>
</dbReference>
<dbReference type="EMBL" id="AK022036">
    <property type="protein sequence ID" value="BAB13957.1"/>
    <property type="molecule type" value="mRNA"/>
</dbReference>
<dbReference type="EMBL" id="CH471052">
    <property type="protein sequence ID" value="EAW78868.1"/>
    <property type="molecule type" value="Genomic_DNA"/>
</dbReference>
<dbReference type="EMBL" id="CH471052">
    <property type="protein sequence ID" value="EAW78869.1"/>
    <property type="molecule type" value="Genomic_DNA"/>
</dbReference>
<dbReference type="EMBL" id="BC014052">
    <property type="protein sequence ID" value="AAH14052.1"/>
    <property type="molecule type" value="mRNA"/>
</dbReference>
<dbReference type="EMBL" id="AL050107">
    <property type="protein sequence ID" value="CAB43275.1"/>
    <property type="molecule type" value="mRNA"/>
</dbReference>
<dbReference type="EMBL" id="AL833852">
    <property type="protein sequence ID" value="CAD38711.1"/>
    <property type="molecule type" value="mRNA"/>
</dbReference>
<dbReference type="CCDS" id="CCDS3144.1"/>
<dbReference type="PIR" id="T08755">
    <property type="entry name" value="T08755"/>
</dbReference>
<dbReference type="RefSeq" id="NP_001161750.1">
    <property type="nucleotide sequence ID" value="NM_001168278.3"/>
</dbReference>
<dbReference type="RefSeq" id="NP_001161752.1">
    <property type="nucleotide sequence ID" value="NM_001168280.3"/>
</dbReference>
<dbReference type="RefSeq" id="NP_001335291.1">
    <property type="nucleotide sequence ID" value="NM_001348362.2"/>
</dbReference>
<dbReference type="RefSeq" id="NP_056287.1">
    <property type="nucleotide sequence ID" value="NM_015472.6"/>
</dbReference>
<dbReference type="RefSeq" id="XP_016861611.1">
    <property type="nucleotide sequence ID" value="XM_017006122.2"/>
</dbReference>
<dbReference type="RefSeq" id="XP_047303886.1">
    <property type="nucleotide sequence ID" value="XM_047447930.1"/>
</dbReference>
<dbReference type="RefSeq" id="XP_047303887.1">
    <property type="nucleotide sequence ID" value="XM_047447931.1"/>
</dbReference>
<dbReference type="RefSeq" id="XP_047303888.1">
    <property type="nucleotide sequence ID" value="XM_047447932.1"/>
</dbReference>
<dbReference type="RefSeq" id="XP_047303889.1">
    <property type="nucleotide sequence ID" value="XM_047447933.1"/>
</dbReference>
<dbReference type="RefSeq" id="XP_054202078.1">
    <property type="nucleotide sequence ID" value="XM_054346103.1"/>
</dbReference>
<dbReference type="RefSeq" id="XP_054202079.1">
    <property type="nucleotide sequence ID" value="XM_054346104.1"/>
</dbReference>
<dbReference type="RefSeq" id="XP_054202080.1">
    <property type="nucleotide sequence ID" value="XM_054346105.1"/>
</dbReference>
<dbReference type="RefSeq" id="XP_054202081.1">
    <property type="nucleotide sequence ID" value="XM_054346106.1"/>
</dbReference>
<dbReference type="RefSeq" id="XP_054202082.1">
    <property type="nucleotide sequence ID" value="XM_054346107.1"/>
</dbReference>
<dbReference type="RefSeq" id="XP_054202083.1">
    <property type="nucleotide sequence ID" value="XM_054346108.1"/>
</dbReference>
<dbReference type="RefSeq" id="XP_054202084.1">
    <property type="nucleotide sequence ID" value="XM_054346109.1"/>
</dbReference>
<dbReference type="RefSeq" id="XP_054202085.1">
    <property type="nucleotide sequence ID" value="XM_054346110.1"/>
</dbReference>
<dbReference type="PDB" id="5N5R">
    <property type="method" value="X-ray"/>
    <property type="resolution" value="1.80 A"/>
    <property type="chains" value="P=87-95"/>
</dbReference>
<dbReference type="PDB" id="5N5T">
    <property type="method" value="X-ray"/>
    <property type="resolution" value="1.80 A"/>
    <property type="chains" value="P=87-94"/>
</dbReference>
<dbReference type="PDB" id="5N5W">
    <property type="method" value="X-ray"/>
    <property type="resolution" value="1.37 A"/>
    <property type="chains" value="P=86-95"/>
</dbReference>
<dbReference type="PDB" id="5N75">
    <property type="method" value="X-ray"/>
    <property type="resolution" value="1.80 A"/>
    <property type="chains" value="P=86-95"/>
</dbReference>
<dbReference type="PDB" id="6RHC">
    <property type="method" value="X-ray"/>
    <property type="resolution" value="1.20 A"/>
    <property type="chains" value="P=86-98"/>
</dbReference>
<dbReference type="PDB" id="6RJL">
    <property type="method" value="X-ray"/>
    <property type="resolution" value="1.28 A"/>
    <property type="chains" value="P=86-98"/>
</dbReference>
<dbReference type="PDB" id="6RJQ">
    <property type="method" value="X-ray"/>
    <property type="resolution" value="1.89 A"/>
    <property type="chains" value="P=86-98"/>
</dbReference>
<dbReference type="PDB" id="6RP6">
    <property type="method" value="X-ray"/>
    <property type="resolution" value="1.89 A"/>
    <property type="chains" value="P=86-98"/>
</dbReference>
<dbReference type="PDB" id="6SLW">
    <property type="method" value="X-ray"/>
    <property type="resolution" value="2.00 A"/>
    <property type="chains" value="P=86-98"/>
</dbReference>
<dbReference type="PDB" id="6SLX">
    <property type="method" value="X-ray"/>
    <property type="resolution" value="1.80 A"/>
    <property type="chains" value="P=86-98"/>
</dbReference>
<dbReference type="PDB" id="8R0Z">
    <property type="method" value="X-ray"/>
    <property type="resolution" value="1.20 A"/>
    <property type="chains" value="P=86-95"/>
</dbReference>
<dbReference type="PDBsum" id="5N5R"/>
<dbReference type="PDBsum" id="5N5T"/>
<dbReference type="PDBsum" id="5N5W"/>
<dbReference type="PDBsum" id="5N75"/>
<dbReference type="PDBsum" id="6RHC"/>
<dbReference type="PDBsum" id="6RJL"/>
<dbReference type="PDBsum" id="6RJQ"/>
<dbReference type="PDBsum" id="6RP6"/>
<dbReference type="PDBsum" id="6SLW"/>
<dbReference type="PDBsum" id="6SLX"/>
<dbReference type="PDBsum" id="8R0Z"/>
<dbReference type="SMR" id="Q9GZV5"/>
<dbReference type="BioGRID" id="117434">
    <property type="interactions" value="393"/>
</dbReference>
<dbReference type="CORUM" id="Q9GZV5"/>
<dbReference type="ELM" id="Q9GZV5"/>
<dbReference type="FunCoup" id="Q9GZV5">
    <property type="interactions" value="2508"/>
</dbReference>
<dbReference type="IntAct" id="Q9GZV5">
    <property type="interactions" value="69"/>
</dbReference>
<dbReference type="MINT" id="Q9GZV5"/>
<dbReference type="STRING" id="9606.ENSP00000419465"/>
<dbReference type="GlyGen" id="Q9GZV5">
    <property type="glycosylation" value="1 site, 1 O-linked glycan (1 site)"/>
</dbReference>
<dbReference type="iPTMnet" id="Q9GZV5"/>
<dbReference type="PhosphoSitePlus" id="Q9GZV5"/>
<dbReference type="BioMuta" id="WWTR1"/>
<dbReference type="DMDM" id="67462080"/>
<dbReference type="jPOST" id="Q9GZV5"/>
<dbReference type="MassIVE" id="Q9GZV5"/>
<dbReference type="PaxDb" id="9606-ENSP00000419465"/>
<dbReference type="PeptideAtlas" id="Q9GZV5"/>
<dbReference type="ProteomicsDB" id="80157"/>
<dbReference type="Pumba" id="Q9GZV5"/>
<dbReference type="Antibodypedia" id="1743">
    <property type="antibodies" value="381 antibodies from 36 providers"/>
</dbReference>
<dbReference type="DNASU" id="25937"/>
<dbReference type="Ensembl" id="ENST00000360632.8">
    <property type="protein sequence ID" value="ENSP00000353847.3"/>
    <property type="gene ID" value="ENSG00000018408.15"/>
</dbReference>
<dbReference type="Ensembl" id="ENST00000465804.5">
    <property type="protein sequence ID" value="ENSP00000419465.1"/>
    <property type="gene ID" value="ENSG00000018408.15"/>
</dbReference>
<dbReference type="Ensembl" id="ENST00000467467.5">
    <property type="protein sequence ID" value="ENSP00000419234.1"/>
    <property type="gene ID" value="ENSG00000018408.15"/>
</dbReference>
<dbReference type="GeneID" id="25937"/>
<dbReference type="KEGG" id="hsa:25937"/>
<dbReference type="MANE-Select" id="ENST00000360632.8">
    <property type="protein sequence ID" value="ENSP00000353847.3"/>
    <property type="RefSeq nucleotide sequence ID" value="NM_015472.6"/>
    <property type="RefSeq protein sequence ID" value="NP_056287.1"/>
</dbReference>
<dbReference type="UCSC" id="uc003exf.4">
    <property type="organism name" value="human"/>
</dbReference>
<dbReference type="AGR" id="HGNC:24042"/>
<dbReference type="CTD" id="25937"/>
<dbReference type="DisGeNET" id="25937"/>
<dbReference type="GeneCards" id="WWTR1"/>
<dbReference type="HGNC" id="HGNC:24042">
    <property type="gene designation" value="WWTR1"/>
</dbReference>
<dbReference type="HPA" id="ENSG00000018408">
    <property type="expression patterns" value="Low tissue specificity"/>
</dbReference>
<dbReference type="MalaCards" id="WWTR1"/>
<dbReference type="MIM" id="607392">
    <property type="type" value="gene"/>
</dbReference>
<dbReference type="neXtProt" id="NX_Q9GZV5"/>
<dbReference type="OpenTargets" id="ENSG00000018408"/>
<dbReference type="Orphanet" id="157791">
    <property type="disease" value="Epithelioid hemangioendothelioma"/>
</dbReference>
<dbReference type="Orphanet" id="673556">
    <property type="disease" value="Pseudomyogenic hemangioendothelioma"/>
</dbReference>
<dbReference type="PharmGKB" id="PA134899667"/>
<dbReference type="VEuPathDB" id="HostDB:ENSG00000018408"/>
<dbReference type="eggNOG" id="KOG0940">
    <property type="taxonomic scope" value="Eukaryota"/>
</dbReference>
<dbReference type="GeneTree" id="ENSGT00510000046760"/>
<dbReference type="HOGENOM" id="CLU_041917_0_0_1"/>
<dbReference type="InParanoid" id="Q9GZV5"/>
<dbReference type="OMA" id="NQPLNPM"/>
<dbReference type="OrthoDB" id="3045089at2759"/>
<dbReference type="PAN-GO" id="Q9GZV5">
    <property type="GO annotations" value="6 GO annotations based on evolutionary models"/>
</dbReference>
<dbReference type="PhylomeDB" id="Q9GZV5"/>
<dbReference type="TreeFam" id="TF326941"/>
<dbReference type="PathwayCommons" id="Q9GZV5"/>
<dbReference type="Reactome" id="R-HSA-2028269">
    <property type="pathway name" value="Signaling by Hippo"/>
</dbReference>
<dbReference type="Reactome" id="R-HSA-2032785">
    <property type="pathway name" value="YAP1- and WWTR1 (TAZ)-stimulated gene expression"/>
</dbReference>
<dbReference type="Reactome" id="R-HSA-2173795">
    <property type="pathway name" value="Downregulation of SMAD2/3:SMAD4 transcriptional activity"/>
</dbReference>
<dbReference type="Reactome" id="R-HSA-2173796">
    <property type="pathway name" value="SMAD2/SMAD3:SMAD4 heterotrimer regulates transcription"/>
</dbReference>
<dbReference type="Reactome" id="R-HSA-5578768">
    <property type="pathway name" value="Physiological factors"/>
</dbReference>
<dbReference type="Reactome" id="R-HSA-8940973">
    <property type="pathway name" value="RUNX2 regulates osteoblast differentiation"/>
</dbReference>
<dbReference type="Reactome" id="R-HSA-8951671">
    <property type="pathway name" value="RUNX3 regulates YAP1-mediated transcription"/>
</dbReference>
<dbReference type="Reactome" id="R-HSA-9619665">
    <property type="pathway name" value="EGR2 and SOX10-mediated initiation of Schwann cell myelination"/>
</dbReference>
<dbReference type="SignaLink" id="Q9GZV5"/>
<dbReference type="SIGNOR" id="Q9GZV5"/>
<dbReference type="BioGRID-ORCS" id="25937">
    <property type="hits" value="251 hits in 1152 CRISPR screens"/>
</dbReference>
<dbReference type="CD-CODE" id="38EC0B30">
    <property type="entry name" value="Transcriptional condensate"/>
</dbReference>
<dbReference type="ChiTaRS" id="WWTR1">
    <property type="organism name" value="human"/>
</dbReference>
<dbReference type="GeneWiki" id="WWTR1"/>
<dbReference type="GenomeRNAi" id="25937"/>
<dbReference type="Pharos" id="Q9GZV5">
    <property type="development level" value="Tbio"/>
</dbReference>
<dbReference type="PRO" id="PR:Q9GZV5"/>
<dbReference type="Proteomes" id="UP000005640">
    <property type="component" value="Chromosome 3"/>
</dbReference>
<dbReference type="RNAct" id="Q9GZV5">
    <property type="molecule type" value="protein"/>
</dbReference>
<dbReference type="Bgee" id="ENSG00000018408">
    <property type="expression patterns" value="Expressed in tibia and 218 other cell types or tissues"/>
</dbReference>
<dbReference type="ExpressionAtlas" id="Q9GZV5">
    <property type="expression patterns" value="baseline and differential"/>
</dbReference>
<dbReference type="GO" id="GO:0005923">
    <property type="term" value="C:bicellular tight junction"/>
    <property type="evidence" value="ECO:0007669"/>
    <property type="project" value="UniProtKB-SubCell"/>
</dbReference>
<dbReference type="GO" id="GO:0005737">
    <property type="term" value="C:cytoplasm"/>
    <property type="evidence" value="ECO:0000314"/>
    <property type="project" value="UniProtKB"/>
</dbReference>
<dbReference type="GO" id="GO:0005829">
    <property type="term" value="C:cytosol"/>
    <property type="evidence" value="ECO:0000314"/>
    <property type="project" value="HPA"/>
</dbReference>
<dbReference type="GO" id="GO:0016604">
    <property type="term" value="C:nuclear body"/>
    <property type="evidence" value="ECO:0000314"/>
    <property type="project" value="HPA"/>
</dbReference>
<dbReference type="GO" id="GO:0005654">
    <property type="term" value="C:nucleoplasm"/>
    <property type="evidence" value="ECO:0000314"/>
    <property type="project" value="HPA"/>
</dbReference>
<dbReference type="GO" id="GO:0005634">
    <property type="term" value="C:nucleus"/>
    <property type="evidence" value="ECO:0000314"/>
    <property type="project" value="UniProtKB"/>
</dbReference>
<dbReference type="GO" id="GO:0005886">
    <property type="term" value="C:plasma membrane"/>
    <property type="evidence" value="ECO:0007669"/>
    <property type="project" value="UniProtKB-SubCell"/>
</dbReference>
<dbReference type="GO" id="GO:0005667">
    <property type="term" value="C:transcription regulator complex"/>
    <property type="evidence" value="ECO:0007669"/>
    <property type="project" value="Ensembl"/>
</dbReference>
<dbReference type="GO" id="GO:0042803">
    <property type="term" value="F:protein homodimerization activity"/>
    <property type="evidence" value="ECO:0007669"/>
    <property type="project" value="Ensembl"/>
</dbReference>
<dbReference type="GO" id="GO:0003713">
    <property type="term" value="F:transcription coactivator activity"/>
    <property type="evidence" value="ECO:0000314"/>
    <property type="project" value="UniProtKB"/>
</dbReference>
<dbReference type="GO" id="GO:0003712">
    <property type="term" value="F:transcription coregulator activity"/>
    <property type="evidence" value="ECO:0000314"/>
    <property type="project" value="UniProt"/>
</dbReference>
<dbReference type="GO" id="GO:0003714">
    <property type="term" value="F:transcription corepressor activity"/>
    <property type="evidence" value="ECO:0000318"/>
    <property type="project" value="GO_Central"/>
</dbReference>
<dbReference type="GO" id="GO:0060271">
    <property type="term" value="P:cilium assembly"/>
    <property type="evidence" value="ECO:0007669"/>
    <property type="project" value="Ensembl"/>
</dbReference>
<dbReference type="GO" id="GO:0032835">
    <property type="term" value="P:glomerulus development"/>
    <property type="evidence" value="ECO:0007669"/>
    <property type="project" value="Ensembl"/>
</dbReference>
<dbReference type="GO" id="GO:0003015">
    <property type="term" value="P:heart process"/>
    <property type="evidence" value="ECO:0007669"/>
    <property type="project" value="Ensembl"/>
</dbReference>
<dbReference type="GO" id="GO:0035329">
    <property type="term" value="P:hippo signaling"/>
    <property type="evidence" value="ECO:0000314"/>
    <property type="project" value="UniProtKB"/>
</dbReference>
<dbReference type="GO" id="GO:0060993">
    <property type="term" value="P:kidney morphogenesis"/>
    <property type="evidence" value="ECO:0007669"/>
    <property type="project" value="Ensembl"/>
</dbReference>
<dbReference type="GO" id="GO:0048762">
    <property type="term" value="P:mesenchymal cell differentiation"/>
    <property type="evidence" value="ECO:0007669"/>
    <property type="project" value="Ensembl"/>
</dbReference>
<dbReference type="GO" id="GO:0035264">
    <property type="term" value="P:multicellular organism growth"/>
    <property type="evidence" value="ECO:0007669"/>
    <property type="project" value="Ensembl"/>
</dbReference>
<dbReference type="GO" id="GO:0090090">
    <property type="term" value="P:negative regulation of canonical Wnt signaling pathway"/>
    <property type="evidence" value="ECO:0000315"/>
    <property type="project" value="BHF-UCL"/>
</dbReference>
<dbReference type="GO" id="GO:0045599">
    <property type="term" value="P:negative regulation of fat cell differentiation"/>
    <property type="evidence" value="ECO:0000316"/>
    <property type="project" value="ARUK-UCL"/>
</dbReference>
<dbReference type="GO" id="GO:0000122">
    <property type="term" value="P:negative regulation of transcription by RNA polymerase II"/>
    <property type="evidence" value="ECO:0007669"/>
    <property type="project" value="Ensembl"/>
</dbReference>
<dbReference type="GO" id="GO:0001649">
    <property type="term" value="P:osteoblast differentiation"/>
    <property type="evidence" value="ECO:0007669"/>
    <property type="project" value="Ensembl"/>
</dbReference>
<dbReference type="GO" id="GO:0008284">
    <property type="term" value="P:positive regulation of cell population proliferation"/>
    <property type="evidence" value="ECO:0000314"/>
    <property type="project" value="UniProtKB"/>
</dbReference>
<dbReference type="GO" id="GO:0010718">
    <property type="term" value="P:positive regulation of epithelial to mesenchymal transition"/>
    <property type="evidence" value="ECO:0000314"/>
    <property type="project" value="UniProtKB"/>
</dbReference>
<dbReference type="GO" id="GO:0045669">
    <property type="term" value="P:positive regulation of osteoblast differentiation"/>
    <property type="evidence" value="ECO:0000316"/>
    <property type="project" value="ARUK-UCL"/>
</dbReference>
<dbReference type="GO" id="GO:1900182">
    <property type="term" value="P:positive regulation of protein localization to nucleus"/>
    <property type="evidence" value="ECO:0000250"/>
    <property type="project" value="UniProtKB"/>
</dbReference>
<dbReference type="GO" id="GO:0045944">
    <property type="term" value="P:positive regulation of transcription by RNA polymerase II"/>
    <property type="evidence" value="ECO:0000318"/>
    <property type="project" value="GO_Central"/>
</dbReference>
<dbReference type="GO" id="GO:0016567">
    <property type="term" value="P:protein ubiquitination"/>
    <property type="evidence" value="ECO:0007669"/>
    <property type="project" value="Ensembl"/>
</dbReference>
<dbReference type="GO" id="GO:0006355">
    <property type="term" value="P:regulation of DNA-templated transcription"/>
    <property type="evidence" value="ECO:0000303"/>
    <property type="project" value="UniProtKB"/>
</dbReference>
<dbReference type="GO" id="GO:0072307">
    <property type="term" value="P:regulation of metanephric nephron tubule epithelial cell differentiation"/>
    <property type="evidence" value="ECO:0007669"/>
    <property type="project" value="Ensembl"/>
</dbReference>
<dbReference type="GO" id="GO:0031146">
    <property type="term" value="P:SCF-dependent proteasomal ubiquitin-dependent protein catabolic process"/>
    <property type="evidence" value="ECO:0007669"/>
    <property type="project" value="Ensembl"/>
</dbReference>
<dbReference type="GO" id="GO:0060395">
    <property type="term" value="P:SMAD protein signal transduction"/>
    <property type="evidence" value="ECO:0000314"/>
    <property type="project" value="UniProtKB"/>
</dbReference>
<dbReference type="GO" id="GO:0017145">
    <property type="term" value="P:stem cell division"/>
    <property type="evidence" value="ECO:0000314"/>
    <property type="project" value="UniProtKB"/>
</dbReference>
<dbReference type="GO" id="GO:0001894">
    <property type="term" value="P:tissue homeostasis"/>
    <property type="evidence" value="ECO:0007669"/>
    <property type="project" value="Ensembl"/>
</dbReference>
<dbReference type="CDD" id="cd00201">
    <property type="entry name" value="WW"/>
    <property type="match status" value="1"/>
</dbReference>
<dbReference type="FunFam" id="2.20.70.10:FF:000012">
    <property type="entry name" value="transcriptional coactivator YAP1 isoform X2"/>
    <property type="match status" value="1"/>
</dbReference>
<dbReference type="Gene3D" id="2.20.70.10">
    <property type="match status" value="1"/>
</dbReference>
<dbReference type="Gene3D" id="6.20.430.10">
    <property type="match status" value="1"/>
</dbReference>
<dbReference type="InterPro" id="IPR001202">
    <property type="entry name" value="WW_dom"/>
</dbReference>
<dbReference type="InterPro" id="IPR036020">
    <property type="entry name" value="WW_dom_sf"/>
</dbReference>
<dbReference type="InterPro" id="IPR051583">
    <property type="entry name" value="YAP1"/>
</dbReference>
<dbReference type="PANTHER" id="PTHR17616:SF6">
    <property type="entry name" value="WW DOMAIN-CONTAINING TRANSCRIPTION REGULATOR PROTEIN 1"/>
    <property type="match status" value="1"/>
</dbReference>
<dbReference type="PANTHER" id="PTHR17616">
    <property type="entry name" value="YES-ASSOCIATED PROTEIN YAP1 FAMILY MEMBER"/>
    <property type="match status" value="1"/>
</dbReference>
<dbReference type="Pfam" id="PF00397">
    <property type="entry name" value="WW"/>
    <property type="match status" value="1"/>
</dbReference>
<dbReference type="SMART" id="SM00456">
    <property type="entry name" value="WW"/>
    <property type="match status" value="1"/>
</dbReference>
<dbReference type="SUPFAM" id="SSF51045">
    <property type="entry name" value="WW domain"/>
    <property type="match status" value="1"/>
</dbReference>
<dbReference type="PROSITE" id="PS01159">
    <property type="entry name" value="WW_DOMAIN_1"/>
    <property type="match status" value="1"/>
</dbReference>
<dbReference type="PROSITE" id="PS50020">
    <property type="entry name" value="WW_DOMAIN_2"/>
    <property type="match status" value="1"/>
</dbReference>
<evidence type="ECO:0000250" key="1">
    <source>
        <dbReference type="UniProtKB" id="A0A8I3PQN6"/>
    </source>
</evidence>
<evidence type="ECO:0000250" key="2">
    <source>
        <dbReference type="UniProtKB" id="Q9EPK5"/>
    </source>
</evidence>
<evidence type="ECO:0000255" key="3"/>
<evidence type="ECO:0000255" key="4">
    <source>
        <dbReference type="PROSITE-ProRule" id="PRU00224"/>
    </source>
</evidence>
<evidence type="ECO:0000256" key="5">
    <source>
        <dbReference type="SAM" id="MobiDB-lite"/>
    </source>
</evidence>
<evidence type="ECO:0000269" key="6">
    <source>
    </source>
</evidence>
<evidence type="ECO:0000269" key="7">
    <source>
    </source>
</evidence>
<evidence type="ECO:0000269" key="8">
    <source>
    </source>
</evidence>
<evidence type="ECO:0000269" key="9">
    <source>
    </source>
</evidence>
<evidence type="ECO:0000269" key="10">
    <source>
    </source>
</evidence>
<evidence type="ECO:0000269" key="11">
    <source>
    </source>
</evidence>
<evidence type="ECO:0000269" key="12">
    <source>
    </source>
</evidence>
<evidence type="ECO:0000269" key="13">
    <source>
    </source>
</evidence>
<evidence type="ECO:0000269" key="14">
    <source>
    </source>
</evidence>
<evidence type="ECO:0000269" key="15">
    <source>
    </source>
</evidence>
<evidence type="ECO:0000269" key="16">
    <source>
    </source>
</evidence>
<evidence type="ECO:0000303" key="17">
    <source>
    </source>
</evidence>
<evidence type="ECO:0000303" key="18">
    <source>
    </source>
</evidence>
<evidence type="ECO:0000305" key="19"/>
<evidence type="ECO:0000312" key="20">
    <source>
        <dbReference type="HGNC" id="HGNC:24042"/>
    </source>
</evidence>
<evidence type="ECO:0007744" key="21">
    <source>
    </source>
</evidence>
<evidence type="ECO:0007744" key="22">
    <source>
    </source>
</evidence>
<evidence type="ECO:0007744" key="23">
    <source>
    </source>
</evidence>
<organism>
    <name type="scientific">Homo sapiens</name>
    <name type="common">Human</name>
    <dbReference type="NCBI Taxonomy" id="9606"/>
    <lineage>
        <taxon>Eukaryota</taxon>
        <taxon>Metazoa</taxon>
        <taxon>Chordata</taxon>
        <taxon>Craniata</taxon>
        <taxon>Vertebrata</taxon>
        <taxon>Euteleostomi</taxon>
        <taxon>Mammalia</taxon>
        <taxon>Eutheria</taxon>
        <taxon>Euarchontoglires</taxon>
        <taxon>Primates</taxon>
        <taxon>Haplorrhini</taxon>
        <taxon>Catarrhini</taxon>
        <taxon>Hominidae</taxon>
        <taxon>Homo</taxon>
    </lineage>
</organism>
<name>WWTR1_HUMAN</name>
<accession>Q9GZV5</accession>
<accession>D3DNH7</accession>
<accession>Q8N3P2</accession>
<accession>Q9Y3W6</accession>